<protein>
    <recommendedName>
        <fullName evidence="1">UDP-N-acetylglucosamine--N-acetylmuramyl-(pentapeptide) pyrophosphoryl-undecaprenol N-acetylglucosamine transferase</fullName>
        <ecNumber evidence="1">2.4.1.227</ecNumber>
    </recommendedName>
    <alternativeName>
        <fullName evidence="1">Undecaprenyl-PP-MurNAc-pentapeptide-UDPGlcNAc GlcNAc transferase</fullName>
    </alternativeName>
</protein>
<name>MURG_YERPP</name>
<reference key="1">
    <citation type="submission" date="2007-02" db="EMBL/GenBank/DDBJ databases">
        <title>Complete sequence of chromosome of Yersinia pestis Pestoides F.</title>
        <authorList>
            <consortium name="US DOE Joint Genome Institute"/>
            <person name="Copeland A."/>
            <person name="Lucas S."/>
            <person name="Lapidus A."/>
            <person name="Barry K."/>
            <person name="Detter J.C."/>
            <person name="Glavina del Rio T."/>
            <person name="Hammon N."/>
            <person name="Israni S."/>
            <person name="Dalin E."/>
            <person name="Tice H."/>
            <person name="Pitluck S."/>
            <person name="Di Bartolo G."/>
            <person name="Chain P."/>
            <person name="Malfatti S."/>
            <person name="Shin M."/>
            <person name="Vergez L."/>
            <person name="Schmutz J."/>
            <person name="Larimer F."/>
            <person name="Land M."/>
            <person name="Hauser L."/>
            <person name="Worsham P."/>
            <person name="Chu M."/>
            <person name="Bearden S."/>
            <person name="Garcia E."/>
            <person name="Richardson P."/>
        </authorList>
    </citation>
    <scope>NUCLEOTIDE SEQUENCE [LARGE SCALE GENOMIC DNA]</scope>
    <source>
        <strain>Pestoides F</strain>
    </source>
</reference>
<proteinExistence type="inferred from homology"/>
<feature type="chain" id="PRO_1000002706" description="UDP-N-acetylglucosamine--N-acetylmuramyl-(pentapeptide) pyrophosphoryl-undecaprenol N-acetylglucosamine transferase">
    <location>
        <begin position="1"/>
        <end position="356"/>
    </location>
</feature>
<feature type="binding site" evidence="1">
    <location>
        <begin position="15"/>
        <end position="17"/>
    </location>
    <ligand>
        <name>UDP-N-acetyl-alpha-D-glucosamine</name>
        <dbReference type="ChEBI" id="CHEBI:57705"/>
    </ligand>
</feature>
<feature type="binding site" evidence="1">
    <location>
        <position position="127"/>
    </location>
    <ligand>
        <name>UDP-N-acetyl-alpha-D-glucosamine</name>
        <dbReference type="ChEBI" id="CHEBI:57705"/>
    </ligand>
</feature>
<feature type="binding site" evidence="1">
    <location>
        <position position="163"/>
    </location>
    <ligand>
        <name>UDP-N-acetyl-alpha-D-glucosamine</name>
        <dbReference type="ChEBI" id="CHEBI:57705"/>
    </ligand>
</feature>
<feature type="binding site" evidence="1">
    <location>
        <position position="191"/>
    </location>
    <ligand>
        <name>UDP-N-acetyl-alpha-D-glucosamine</name>
        <dbReference type="ChEBI" id="CHEBI:57705"/>
    </ligand>
</feature>
<feature type="binding site" evidence="1">
    <location>
        <position position="244"/>
    </location>
    <ligand>
        <name>UDP-N-acetyl-alpha-D-glucosamine</name>
        <dbReference type="ChEBI" id="CHEBI:57705"/>
    </ligand>
</feature>
<feature type="binding site" evidence="1">
    <location>
        <begin position="263"/>
        <end position="268"/>
    </location>
    <ligand>
        <name>UDP-N-acetyl-alpha-D-glucosamine</name>
        <dbReference type="ChEBI" id="CHEBI:57705"/>
    </ligand>
</feature>
<feature type="binding site" evidence="1">
    <location>
        <position position="288"/>
    </location>
    <ligand>
        <name>UDP-N-acetyl-alpha-D-glucosamine</name>
        <dbReference type="ChEBI" id="CHEBI:57705"/>
    </ligand>
</feature>
<sequence>MSGKTKRLMVMAAGTGGHVFPGLAVAHHLMAQGWQVRWLGTADRMEASLVPQHGIEIDFIKISGLRGKGLMAQLTAPIRIYRAVRQAQKIMRDYQPNVVLGMGGYVSGPGGLAAWLCGVPVVLHEQNGIAGLTNRWLARIAKKVLQAFPGAFPNADVVGNPVRTDVLALPLPAVRLSGREGPIRVLVIGGSQGARILNQTLPLVAASLGEQITLWHQVGKGALPEVSQAYQQAGQAGHLVVEFIDDMAAAYAWADVVVCRSGALTVSEVAAAGLPAIFVPFQHKDRQQYWNALPLEKAGAAKIIEQPQFTATSVSSLLASWDRATLLSMAERARSVAIPDATERVAAEVVAASKSA</sequence>
<organism>
    <name type="scientific">Yersinia pestis (strain Pestoides F)</name>
    <dbReference type="NCBI Taxonomy" id="386656"/>
    <lineage>
        <taxon>Bacteria</taxon>
        <taxon>Pseudomonadati</taxon>
        <taxon>Pseudomonadota</taxon>
        <taxon>Gammaproteobacteria</taxon>
        <taxon>Enterobacterales</taxon>
        <taxon>Yersiniaceae</taxon>
        <taxon>Yersinia</taxon>
    </lineage>
</organism>
<accession>A4TQ83</accession>
<dbReference type="EC" id="2.4.1.227" evidence="1"/>
<dbReference type="EMBL" id="CP000668">
    <property type="protein sequence ID" value="ABP41445.1"/>
    <property type="molecule type" value="Genomic_DNA"/>
</dbReference>
<dbReference type="RefSeq" id="WP_011906408.1">
    <property type="nucleotide sequence ID" value="NZ_CP009715.1"/>
</dbReference>
<dbReference type="SMR" id="A4TQ83"/>
<dbReference type="CAZy" id="GT28">
    <property type="family name" value="Glycosyltransferase Family 28"/>
</dbReference>
<dbReference type="KEGG" id="ypp:YPDSF_3087"/>
<dbReference type="PATRIC" id="fig|386656.14.peg.1273"/>
<dbReference type="UniPathway" id="UPA00219"/>
<dbReference type="GO" id="GO:0005886">
    <property type="term" value="C:plasma membrane"/>
    <property type="evidence" value="ECO:0007669"/>
    <property type="project" value="UniProtKB-SubCell"/>
</dbReference>
<dbReference type="GO" id="GO:0051991">
    <property type="term" value="F:UDP-N-acetyl-D-glucosamine:N-acetylmuramoyl-L-alanyl-D-glutamyl-meso-2,6-diaminopimelyl-D-alanyl-D-alanine-diphosphoundecaprenol 4-beta-N-acetylglucosaminlytransferase activity"/>
    <property type="evidence" value="ECO:0007669"/>
    <property type="project" value="RHEA"/>
</dbReference>
<dbReference type="GO" id="GO:0050511">
    <property type="term" value="F:undecaprenyldiphospho-muramoylpentapeptide beta-N-acetylglucosaminyltransferase activity"/>
    <property type="evidence" value="ECO:0007669"/>
    <property type="project" value="UniProtKB-UniRule"/>
</dbReference>
<dbReference type="GO" id="GO:0005975">
    <property type="term" value="P:carbohydrate metabolic process"/>
    <property type="evidence" value="ECO:0007669"/>
    <property type="project" value="InterPro"/>
</dbReference>
<dbReference type="GO" id="GO:0051301">
    <property type="term" value="P:cell division"/>
    <property type="evidence" value="ECO:0007669"/>
    <property type="project" value="UniProtKB-KW"/>
</dbReference>
<dbReference type="GO" id="GO:0071555">
    <property type="term" value="P:cell wall organization"/>
    <property type="evidence" value="ECO:0007669"/>
    <property type="project" value="UniProtKB-KW"/>
</dbReference>
<dbReference type="GO" id="GO:0030259">
    <property type="term" value="P:lipid glycosylation"/>
    <property type="evidence" value="ECO:0007669"/>
    <property type="project" value="UniProtKB-UniRule"/>
</dbReference>
<dbReference type="GO" id="GO:0009252">
    <property type="term" value="P:peptidoglycan biosynthetic process"/>
    <property type="evidence" value="ECO:0007669"/>
    <property type="project" value="UniProtKB-UniRule"/>
</dbReference>
<dbReference type="GO" id="GO:0008360">
    <property type="term" value="P:regulation of cell shape"/>
    <property type="evidence" value="ECO:0007669"/>
    <property type="project" value="UniProtKB-KW"/>
</dbReference>
<dbReference type="CDD" id="cd03785">
    <property type="entry name" value="GT28_MurG"/>
    <property type="match status" value="1"/>
</dbReference>
<dbReference type="FunFam" id="3.40.50.2000:FF:000016">
    <property type="entry name" value="UDP-N-acetylglucosamine--N-acetylmuramyl-(pentapeptide) pyrophosphoryl-undecaprenol N-acetylglucosamine transferase"/>
    <property type="match status" value="1"/>
</dbReference>
<dbReference type="FunFam" id="3.40.50.2000:FF:000018">
    <property type="entry name" value="UDP-N-acetylglucosamine--N-acetylmuramyl-(pentapeptide) pyrophosphoryl-undecaprenol N-acetylglucosamine transferase"/>
    <property type="match status" value="1"/>
</dbReference>
<dbReference type="Gene3D" id="3.40.50.2000">
    <property type="entry name" value="Glycogen Phosphorylase B"/>
    <property type="match status" value="2"/>
</dbReference>
<dbReference type="HAMAP" id="MF_00033">
    <property type="entry name" value="MurG"/>
    <property type="match status" value="1"/>
</dbReference>
<dbReference type="InterPro" id="IPR006009">
    <property type="entry name" value="GlcNAc_MurG"/>
</dbReference>
<dbReference type="InterPro" id="IPR007235">
    <property type="entry name" value="Glyco_trans_28_C"/>
</dbReference>
<dbReference type="InterPro" id="IPR004276">
    <property type="entry name" value="GlycoTrans_28_N"/>
</dbReference>
<dbReference type="NCBIfam" id="TIGR01133">
    <property type="entry name" value="murG"/>
    <property type="match status" value="1"/>
</dbReference>
<dbReference type="PANTHER" id="PTHR21015:SF22">
    <property type="entry name" value="GLYCOSYLTRANSFERASE"/>
    <property type="match status" value="1"/>
</dbReference>
<dbReference type="PANTHER" id="PTHR21015">
    <property type="entry name" value="UDP-N-ACETYLGLUCOSAMINE--N-ACETYLMURAMYL-(PENTAPEPTIDE) PYROPHOSPHORYL-UNDECAPRENOL N-ACETYLGLUCOSAMINE TRANSFERASE 1"/>
    <property type="match status" value="1"/>
</dbReference>
<dbReference type="Pfam" id="PF04101">
    <property type="entry name" value="Glyco_tran_28_C"/>
    <property type="match status" value="1"/>
</dbReference>
<dbReference type="Pfam" id="PF03033">
    <property type="entry name" value="Glyco_transf_28"/>
    <property type="match status" value="1"/>
</dbReference>
<dbReference type="SUPFAM" id="SSF53756">
    <property type="entry name" value="UDP-Glycosyltransferase/glycogen phosphorylase"/>
    <property type="match status" value="1"/>
</dbReference>
<comment type="function">
    <text evidence="1">Cell wall formation. Catalyzes the transfer of a GlcNAc subunit on undecaprenyl-pyrophosphoryl-MurNAc-pentapeptide (lipid intermediate I) to form undecaprenyl-pyrophosphoryl-MurNAc-(pentapeptide)GlcNAc (lipid intermediate II).</text>
</comment>
<comment type="catalytic activity">
    <reaction evidence="1">
        <text>di-trans,octa-cis-undecaprenyl diphospho-N-acetyl-alpha-D-muramoyl-L-alanyl-D-glutamyl-meso-2,6-diaminopimeloyl-D-alanyl-D-alanine + UDP-N-acetyl-alpha-D-glucosamine = di-trans,octa-cis-undecaprenyl diphospho-[N-acetyl-alpha-D-glucosaminyl-(1-&gt;4)]-N-acetyl-alpha-D-muramoyl-L-alanyl-D-glutamyl-meso-2,6-diaminopimeloyl-D-alanyl-D-alanine + UDP + H(+)</text>
        <dbReference type="Rhea" id="RHEA:31227"/>
        <dbReference type="ChEBI" id="CHEBI:15378"/>
        <dbReference type="ChEBI" id="CHEBI:57705"/>
        <dbReference type="ChEBI" id="CHEBI:58223"/>
        <dbReference type="ChEBI" id="CHEBI:61387"/>
        <dbReference type="ChEBI" id="CHEBI:61388"/>
        <dbReference type="EC" id="2.4.1.227"/>
    </reaction>
</comment>
<comment type="pathway">
    <text evidence="1">Cell wall biogenesis; peptidoglycan biosynthesis.</text>
</comment>
<comment type="subcellular location">
    <subcellularLocation>
        <location evidence="1">Cell inner membrane</location>
        <topology evidence="1">Peripheral membrane protein</topology>
        <orientation evidence="1">Cytoplasmic side</orientation>
    </subcellularLocation>
</comment>
<comment type="similarity">
    <text evidence="1">Belongs to the glycosyltransferase 28 family. MurG subfamily.</text>
</comment>
<gene>
    <name evidence="1" type="primary">murG</name>
    <name type="ordered locus">YPDSF_3087</name>
</gene>
<evidence type="ECO:0000255" key="1">
    <source>
        <dbReference type="HAMAP-Rule" id="MF_00033"/>
    </source>
</evidence>
<keyword id="KW-0131">Cell cycle</keyword>
<keyword id="KW-0132">Cell division</keyword>
<keyword id="KW-0997">Cell inner membrane</keyword>
<keyword id="KW-1003">Cell membrane</keyword>
<keyword id="KW-0133">Cell shape</keyword>
<keyword id="KW-0961">Cell wall biogenesis/degradation</keyword>
<keyword id="KW-0328">Glycosyltransferase</keyword>
<keyword id="KW-0472">Membrane</keyword>
<keyword id="KW-0573">Peptidoglycan synthesis</keyword>
<keyword id="KW-0808">Transferase</keyword>